<feature type="chain" id="PRO_0000275908" description="NAD(P)H-quinone oxidoreductase chain 4, chloroplastic">
    <location>
        <begin position="1"/>
        <end position="498"/>
    </location>
</feature>
<feature type="transmembrane region" description="Helical" evidence="1">
    <location>
        <begin position="4"/>
        <end position="24"/>
    </location>
</feature>
<feature type="transmembrane region" description="Helical" evidence="1">
    <location>
        <begin position="31"/>
        <end position="51"/>
    </location>
</feature>
<feature type="transmembrane region" description="Helical" evidence="1">
    <location>
        <begin position="76"/>
        <end position="96"/>
    </location>
</feature>
<feature type="transmembrane region" description="Helical" evidence="1">
    <location>
        <begin position="113"/>
        <end position="130"/>
    </location>
</feature>
<feature type="transmembrane region" description="Helical" evidence="1">
    <location>
        <begin position="134"/>
        <end position="154"/>
    </location>
</feature>
<feature type="transmembrane region" description="Helical" evidence="1">
    <location>
        <begin position="167"/>
        <end position="187"/>
    </location>
</feature>
<feature type="transmembrane region" description="Helical" evidence="1">
    <location>
        <begin position="208"/>
        <end position="228"/>
    </location>
</feature>
<feature type="transmembrane region" description="Helical" evidence="1">
    <location>
        <begin position="242"/>
        <end position="262"/>
    </location>
</feature>
<feature type="transmembrane region" description="Helical" evidence="1">
    <location>
        <begin position="272"/>
        <end position="292"/>
    </location>
</feature>
<feature type="transmembrane region" description="Helical" evidence="1">
    <location>
        <begin position="305"/>
        <end position="325"/>
    </location>
</feature>
<feature type="transmembrane region" description="Helical" evidence="1">
    <location>
        <begin position="330"/>
        <end position="350"/>
    </location>
</feature>
<feature type="transmembrane region" description="Helical" evidence="1">
    <location>
        <begin position="386"/>
        <end position="406"/>
    </location>
</feature>
<feature type="transmembrane region" description="Helical" evidence="1">
    <location>
        <begin position="411"/>
        <end position="431"/>
    </location>
</feature>
<feature type="transmembrane region" description="Helical" evidence="1">
    <location>
        <begin position="463"/>
        <end position="483"/>
    </location>
</feature>
<evidence type="ECO:0000255" key="1">
    <source>
        <dbReference type="HAMAP-Rule" id="MF_00491"/>
    </source>
</evidence>
<reference key="1">
    <citation type="journal article" date="2005" name="Plant Mol. Biol.">
        <title>Complete chloroplast genome sequence of Glycine max and comparative analyses with other legume genomes.</title>
        <authorList>
            <person name="Saski C."/>
            <person name="Lee S.-B."/>
            <person name="Daniell H."/>
            <person name="Wood T.C."/>
            <person name="Tomkins J."/>
            <person name="Kim H.-G."/>
            <person name="Jansen R.K."/>
        </authorList>
    </citation>
    <scope>NUCLEOTIDE SEQUENCE [LARGE SCALE GENOMIC DNA]</scope>
    <source>
        <strain>cv. PI 437654</strain>
    </source>
</reference>
<protein>
    <recommendedName>
        <fullName evidence="1">NAD(P)H-quinone oxidoreductase chain 4, chloroplastic</fullName>
        <ecNumber evidence="1">7.1.1.-</ecNumber>
    </recommendedName>
    <alternativeName>
        <fullName evidence="1">NAD(P)H dehydrogenase, chain 4</fullName>
    </alternativeName>
    <alternativeName>
        <fullName evidence="1">NADH-plastoquinone oxidoreductase chain 4</fullName>
    </alternativeName>
</protein>
<name>NU4C_SOYBN</name>
<geneLocation type="chloroplast"/>
<sequence>MNYFPWLTTVVILPIVGGSLIFLFPHKGNKVIKWYTICICLIDLLITSYVFCYHFELDDPLIQLTENYKWINFFDFYWSFGIDGLSLGPILLTGFITTLATLAAQPVTRESKLFYFLMLAMYSGQIGTFSSQDILLFFIMWEFELIPVYLLLSMWGGKKRLYSATKFILYTAGSSVFLLLGILGMSFYSSNEPTLNFESLTNQSYPVALEIIFYIGFLIAFAVKSPIIPLHTWLPDTHGEAHYSTCMLLAGILLKMGAYGLVRINMEFLSRAHSIFSPWLILLGSIQIIYAASTSLGQRNLKKRIAYSSVSHMGFLLLGIGSISDTGLNGAILQIISHGFIGAALFFLAGTSYDRLRLLYLDEMGGMAIPMPKIFTVFTILSMASLALPGMSGFVAELIVLLGIITSQKYLLITKILITFVTAIGMILTPIYSLSMLRQMFYGYKLFNTPNSYFFDSGPRELFISISILIPVISIGIYPDFIFSFSADKVEAILSNFL</sequence>
<dbReference type="EC" id="7.1.1.-" evidence="1"/>
<dbReference type="EMBL" id="DQ317523">
    <property type="protein sequence ID" value="ABC25177.1"/>
    <property type="molecule type" value="Genomic_DNA"/>
</dbReference>
<dbReference type="RefSeq" id="YP_538818.1">
    <property type="nucleotide sequence ID" value="NC_007942.1"/>
</dbReference>
<dbReference type="SMR" id="Q2PMN2"/>
<dbReference type="FunCoup" id="Q2PMN2">
    <property type="interactions" value="16"/>
</dbReference>
<dbReference type="STRING" id="3847.Q2PMN2"/>
<dbReference type="GeneID" id="3989361"/>
<dbReference type="KEGG" id="gmx:3989361"/>
<dbReference type="InParanoid" id="Q2PMN2"/>
<dbReference type="Proteomes" id="UP000008827">
    <property type="component" value="Chloroplast"/>
</dbReference>
<dbReference type="GO" id="GO:0009535">
    <property type="term" value="C:chloroplast thylakoid membrane"/>
    <property type="evidence" value="ECO:0007669"/>
    <property type="project" value="UniProtKB-SubCell"/>
</dbReference>
<dbReference type="GO" id="GO:0008137">
    <property type="term" value="F:NADH dehydrogenase (ubiquinone) activity"/>
    <property type="evidence" value="ECO:0007669"/>
    <property type="project" value="InterPro"/>
</dbReference>
<dbReference type="GO" id="GO:0048039">
    <property type="term" value="F:ubiquinone binding"/>
    <property type="evidence" value="ECO:0000318"/>
    <property type="project" value="GO_Central"/>
</dbReference>
<dbReference type="GO" id="GO:0009060">
    <property type="term" value="P:aerobic respiration"/>
    <property type="evidence" value="ECO:0000318"/>
    <property type="project" value="GO_Central"/>
</dbReference>
<dbReference type="GO" id="GO:0042773">
    <property type="term" value="P:ATP synthesis coupled electron transport"/>
    <property type="evidence" value="ECO:0007669"/>
    <property type="project" value="InterPro"/>
</dbReference>
<dbReference type="GO" id="GO:0015990">
    <property type="term" value="P:electron transport coupled proton transport"/>
    <property type="evidence" value="ECO:0000318"/>
    <property type="project" value="GO_Central"/>
</dbReference>
<dbReference type="HAMAP" id="MF_00491">
    <property type="entry name" value="NDH1_NuoM"/>
    <property type="match status" value="1"/>
</dbReference>
<dbReference type="InterPro" id="IPR022997">
    <property type="entry name" value="NADH_Q_OxRdtase_chain4"/>
</dbReference>
<dbReference type="InterPro" id="IPR010227">
    <property type="entry name" value="NADH_Q_OxRdtase_chainM/4"/>
</dbReference>
<dbReference type="InterPro" id="IPR003918">
    <property type="entry name" value="NADH_UbQ_OxRdtase"/>
</dbReference>
<dbReference type="InterPro" id="IPR001750">
    <property type="entry name" value="ND/Mrp_TM"/>
</dbReference>
<dbReference type="NCBIfam" id="TIGR01972">
    <property type="entry name" value="NDH_I_M"/>
    <property type="match status" value="1"/>
</dbReference>
<dbReference type="PANTHER" id="PTHR43507:SF21">
    <property type="entry name" value="NAD(P)H-QUINONE OXIDOREDUCTASE CHAIN 4, CHLOROPLASTIC"/>
    <property type="match status" value="1"/>
</dbReference>
<dbReference type="PANTHER" id="PTHR43507">
    <property type="entry name" value="NADH-UBIQUINONE OXIDOREDUCTASE CHAIN 4"/>
    <property type="match status" value="1"/>
</dbReference>
<dbReference type="Pfam" id="PF00361">
    <property type="entry name" value="Proton_antipo_M"/>
    <property type="match status" value="1"/>
</dbReference>
<dbReference type="PRINTS" id="PR01437">
    <property type="entry name" value="NUOXDRDTASE4"/>
</dbReference>
<proteinExistence type="inferred from homology"/>
<organism>
    <name type="scientific">Glycine max</name>
    <name type="common">Soybean</name>
    <name type="synonym">Glycine hispida</name>
    <dbReference type="NCBI Taxonomy" id="3847"/>
    <lineage>
        <taxon>Eukaryota</taxon>
        <taxon>Viridiplantae</taxon>
        <taxon>Streptophyta</taxon>
        <taxon>Embryophyta</taxon>
        <taxon>Tracheophyta</taxon>
        <taxon>Spermatophyta</taxon>
        <taxon>Magnoliopsida</taxon>
        <taxon>eudicotyledons</taxon>
        <taxon>Gunneridae</taxon>
        <taxon>Pentapetalae</taxon>
        <taxon>rosids</taxon>
        <taxon>fabids</taxon>
        <taxon>Fabales</taxon>
        <taxon>Fabaceae</taxon>
        <taxon>Papilionoideae</taxon>
        <taxon>50 kb inversion clade</taxon>
        <taxon>NPAAA clade</taxon>
        <taxon>indigoferoid/millettioid clade</taxon>
        <taxon>Phaseoleae</taxon>
        <taxon>Glycine</taxon>
        <taxon>Glycine subgen. Soja</taxon>
    </lineage>
</organism>
<keyword id="KW-0150">Chloroplast</keyword>
<keyword id="KW-0472">Membrane</keyword>
<keyword id="KW-0520">NAD</keyword>
<keyword id="KW-0521">NADP</keyword>
<keyword id="KW-0934">Plastid</keyword>
<keyword id="KW-0618">Plastoquinone</keyword>
<keyword id="KW-0874">Quinone</keyword>
<keyword id="KW-1185">Reference proteome</keyword>
<keyword id="KW-0793">Thylakoid</keyword>
<keyword id="KW-1278">Translocase</keyword>
<keyword id="KW-0812">Transmembrane</keyword>
<keyword id="KW-1133">Transmembrane helix</keyword>
<gene>
    <name evidence="1" type="primary">ndhD</name>
</gene>
<accession>Q2PMN2</accession>
<comment type="catalytic activity">
    <reaction evidence="1">
        <text>a plastoquinone + NADH + (n+1) H(+)(in) = a plastoquinol + NAD(+) + n H(+)(out)</text>
        <dbReference type="Rhea" id="RHEA:42608"/>
        <dbReference type="Rhea" id="RHEA-COMP:9561"/>
        <dbReference type="Rhea" id="RHEA-COMP:9562"/>
        <dbReference type="ChEBI" id="CHEBI:15378"/>
        <dbReference type="ChEBI" id="CHEBI:17757"/>
        <dbReference type="ChEBI" id="CHEBI:57540"/>
        <dbReference type="ChEBI" id="CHEBI:57945"/>
        <dbReference type="ChEBI" id="CHEBI:62192"/>
    </reaction>
</comment>
<comment type="catalytic activity">
    <reaction evidence="1">
        <text>a plastoquinone + NADPH + (n+1) H(+)(in) = a plastoquinol + NADP(+) + n H(+)(out)</text>
        <dbReference type="Rhea" id="RHEA:42612"/>
        <dbReference type="Rhea" id="RHEA-COMP:9561"/>
        <dbReference type="Rhea" id="RHEA-COMP:9562"/>
        <dbReference type="ChEBI" id="CHEBI:15378"/>
        <dbReference type="ChEBI" id="CHEBI:17757"/>
        <dbReference type="ChEBI" id="CHEBI:57783"/>
        <dbReference type="ChEBI" id="CHEBI:58349"/>
        <dbReference type="ChEBI" id="CHEBI:62192"/>
    </reaction>
</comment>
<comment type="subcellular location">
    <subcellularLocation>
        <location evidence="1">Plastid</location>
        <location evidence="1">Chloroplast thylakoid membrane</location>
        <topology evidence="1">Multi-pass membrane protein</topology>
    </subcellularLocation>
</comment>
<comment type="similarity">
    <text evidence="1">Belongs to the complex I subunit 4 family.</text>
</comment>